<sequence>MARTRNRFDRTPFQTAITDLSHDGRGVARRDGEGGKVTFISGALPGELVRAEPTARSRHFDEAKTVEVLEASPQRVAPRCPHFGVCAGCVLQHLEESQQIVAKQRVLMDNLERIGHVTPQAVLPGLTGDNWGYRRKGRFSVRRVEKKAKTLVGFRELDPRFVADLSVCYTVIPQIGEKIPLLAALVEGMDGKRDIPQIEFIAGDDAVALTIRHMQPLSARDQQAWIAFAQEHGFAIFLQPGGVDSVHPLWPQEVPLSFRLPQWDVDLAFRPLDFIQVNASLNQKMIVHALALLDAKPDDRVLDLFCGLGNFTLPLARVVREVVGVEGDAGLVARAKDNAQRNGLDNAQFYAADLTQDQRNAAWMRQGFDKLLLDPPRSGALEVLQQLPLKTFERIVYVSCHPGSLARDAGYLVNEQGFTLVSAGAMDMFPHTAHVESIAVFERR</sequence>
<comment type="function">
    <text evidence="1">Catalyzes the formation of 5-methyl-uridine at position 1939 (m5U1939) in 23S rRNA.</text>
</comment>
<comment type="catalytic activity">
    <reaction evidence="1">
        <text>uridine(1939) in 23S rRNA + S-adenosyl-L-methionine = 5-methyluridine(1939) in 23S rRNA + S-adenosyl-L-homocysteine + H(+)</text>
        <dbReference type="Rhea" id="RHEA:42908"/>
        <dbReference type="Rhea" id="RHEA-COMP:10278"/>
        <dbReference type="Rhea" id="RHEA-COMP:10279"/>
        <dbReference type="ChEBI" id="CHEBI:15378"/>
        <dbReference type="ChEBI" id="CHEBI:57856"/>
        <dbReference type="ChEBI" id="CHEBI:59789"/>
        <dbReference type="ChEBI" id="CHEBI:65315"/>
        <dbReference type="ChEBI" id="CHEBI:74447"/>
        <dbReference type="EC" id="2.1.1.190"/>
    </reaction>
</comment>
<comment type="similarity">
    <text evidence="1">Belongs to the class I-like SAM-binding methyltransferase superfamily. RNA M5U methyltransferase family. RlmD subfamily.</text>
</comment>
<comment type="sequence caution" evidence="2">
    <conflict type="erroneous initiation">
        <sequence resource="EMBL-CDS" id="BAE68510"/>
    </conflict>
</comment>
<accession>Q2P4L7</accession>
<proteinExistence type="inferred from homology"/>
<name>RLMD_XANOM</name>
<organism>
    <name type="scientific">Xanthomonas oryzae pv. oryzae (strain MAFF 311018)</name>
    <dbReference type="NCBI Taxonomy" id="342109"/>
    <lineage>
        <taxon>Bacteria</taxon>
        <taxon>Pseudomonadati</taxon>
        <taxon>Pseudomonadota</taxon>
        <taxon>Gammaproteobacteria</taxon>
        <taxon>Lysobacterales</taxon>
        <taxon>Lysobacteraceae</taxon>
        <taxon>Xanthomonas</taxon>
    </lineage>
</organism>
<gene>
    <name evidence="1" type="primary">rlmD</name>
    <name type="synonym">rumA</name>
    <name type="ordered locus">XOO1755</name>
</gene>
<dbReference type="EC" id="2.1.1.190" evidence="1"/>
<dbReference type="EMBL" id="AP008229">
    <property type="protein sequence ID" value="BAE68510.1"/>
    <property type="status" value="ALT_INIT"/>
    <property type="molecule type" value="Genomic_DNA"/>
</dbReference>
<dbReference type="RefSeq" id="WP_011408251.1">
    <property type="nucleotide sequence ID" value="NC_007705.1"/>
</dbReference>
<dbReference type="SMR" id="Q2P4L7"/>
<dbReference type="KEGG" id="xom:XOO1755"/>
<dbReference type="HOGENOM" id="CLU_014689_8_2_6"/>
<dbReference type="GO" id="GO:0051539">
    <property type="term" value="F:4 iron, 4 sulfur cluster binding"/>
    <property type="evidence" value="ECO:0007669"/>
    <property type="project" value="UniProtKB-KW"/>
</dbReference>
<dbReference type="GO" id="GO:0005506">
    <property type="term" value="F:iron ion binding"/>
    <property type="evidence" value="ECO:0007669"/>
    <property type="project" value="UniProtKB-UniRule"/>
</dbReference>
<dbReference type="GO" id="GO:0003723">
    <property type="term" value="F:RNA binding"/>
    <property type="evidence" value="ECO:0007669"/>
    <property type="project" value="InterPro"/>
</dbReference>
<dbReference type="GO" id="GO:0070041">
    <property type="term" value="F:rRNA (uridine-C5-)-methyltransferase activity"/>
    <property type="evidence" value="ECO:0007669"/>
    <property type="project" value="UniProtKB-UniRule"/>
</dbReference>
<dbReference type="GO" id="GO:0070475">
    <property type="term" value="P:rRNA base methylation"/>
    <property type="evidence" value="ECO:0007669"/>
    <property type="project" value="TreeGrafter"/>
</dbReference>
<dbReference type="CDD" id="cd02440">
    <property type="entry name" value="AdoMet_MTases"/>
    <property type="match status" value="1"/>
</dbReference>
<dbReference type="FunFam" id="3.40.50.150:FF:000009">
    <property type="entry name" value="23S rRNA (Uracil(1939)-C(5))-methyltransferase RlmD"/>
    <property type="match status" value="1"/>
</dbReference>
<dbReference type="FunFam" id="2.40.50.1070:FF:000006">
    <property type="entry name" value="23S rRNA (uracil(1939)-C(5))-methyltransferase RlmD"/>
    <property type="match status" value="1"/>
</dbReference>
<dbReference type="FunFam" id="2.40.50.140:FF:000097">
    <property type="entry name" value="23S rRNA (uracil(1939)-C(5))-methyltransferase RlmD"/>
    <property type="match status" value="1"/>
</dbReference>
<dbReference type="Gene3D" id="2.40.50.1070">
    <property type="match status" value="1"/>
</dbReference>
<dbReference type="Gene3D" id="2.40.50.140">
    <property type="entry name" value="Nucleic acid-binding proteins"/>
    <property type="match status" value="1"/>
</dbReference>
<dbReference type="Gene3D" id="3.40.50.150">
    <property type="entry name" value="Vaccinia Virus protein VP39"/>
    <property type="match status" value="1"/>
</dbReference>
<dbReference type="HAMAP" id="MF_01010">
    <property type="entry name" value="23SrRNA_methyltr_RlmD"/>
    <property type="match status" value="1"/>
</dbReference>
<dbReference type="InterPro" id="IPR001566">
    <property type="entry name" value="23S_rRNA_MeTrfase_RlmD"/>
</dbReference>
<dbReference type="InterPro" id="IPR030390">
    <property type="entry name" value="MeTrfase_TrmA_AS"/>
</dbReference>
<dbReference type="InterPro" id="IPR030391">
    <property type="entry name" value="MeTrfase_TrmA_CS"/>
</dbReference>
<dbReference type="InterPro" id="IPR012340">
    <property type="entry name" value="NA-bd_OB-fold"/>
</dbReference>
<dbReference type="InterPro" id="IPR029063">
    <property type="entry name" value="SAM-dependent_MTases_sf"/>
</dbReference>
<dbReference type="InterPro" id="IPR002792">
    <property type="entry name" value="TRAM_dom"/>
</dbReference>
<dbReference type="InterPro" id="IPR010280">
    <property type="entry name" value="U5_MeTrfase_fam"/>
</dbReference>
<dbReference type="NCBIfam" id="NF009639">
    <property type="entry name" value="PRK13168.1"/>
    <property type="match status" value="1"/>
</dbReference>
<dbReference type="NCBIfam" id="TIGR00479">
    <property type="entry name" value="rumA"/>
    <property type="match status" value="1"/>
</dbReference>
<dbReference type="PANTHER" id="PTHR11061:SF49">
    <property type="entry name" value="23S RRNA (URACIL(1939)-C(5))-METHYLTRANSFERASE RLMD"/>
    <property type="match status" value="1"/>
</dbReference>
<dbReference type="PANTHER" id="PTHR11061">
    <property type="entry name" value="RNA M5U METHYLTRANSFERASE"/>
    <property type="match status" value="1"/>
</dbReference>
<dbReference type="Pfam" id="PF05958">
    <property type="entry name" value="tRNA_U5-meth_tr"/>
    <property type="match status" value="1"/>
</dbReference>
<dbReference type="SUPFAM" id="SSF50249">
    <property type="entry name" value="Nucleic acid-binding proteins"/>
    <property type="match status" value="1"/>
</dbReference>
<dbReference type="SUPFAM" id="SSF53335">
    <property type="entry name" value="S-adenosyl-L-methionine-dependent methyltransferases"/>
    <property type="match status" value="1"/>
</dbReference>
<dbReference type="PROSITE" id="PS51687">
    <property type="entry name" value="SAM_MT_RNA_M5U"/>
    <property type="match status" value="1"/>
</dbReference>
<dbReference type="PROSITE" id="PS50926">
    <property type="entry name" value="TRAM"/>
    <property type="match status" value="1"/>
</dbReference>
<dbReference type="PROSITE" id="PS01230">
    <property type="entry name" value="TRMA_1"/>
    <property type="match status" value="1"/>
</dbReference>
<dbReference type="PROSITE" id="PS01231">
    <property type="entry name" value="TRMA_2"/>
    <property type="match status" value="1"/>
</dbReference>
<keyword id="KW-0004">4Fe-4S</keyword>
<keyword id="KW-0408">Iron</keyword>
<keyword id="KW-0411">Iron-sulfur</keyword>
<keyword id="KW-0479">Metal-binding</keyword>
<keyword id="KW-0489">Methyltransferase</keyword>
<keyword id="KW-0698">rRNA processing</keyword>
<keyword id="KW-0949">S-adenosyl-L-methionine</keyword>
<keyword id="KW-0808">Transferase</keyword>
<reference key="1">
    <citation type="journal article" date="2005" name="Jpn. Agric. Res. Q.">
        <title>Genome sequence of Xanthomonas oryzae pv. oryzae suggests contribution of large numbers of effector genes and insertion sequences to its race diversity.</title>
        <authorList>
            <person name="Ochiai H."/>
            <person name="Inoue Y."/>
            <person name="Takeya M."/>
            <person name="Sasaki A."/>
            <person name="Kaku H."/>
        </authorList>
    </citation>
    <scope>NUCLEOTIDE SEQUENCE [LARGE SCALE GENOMIC DNA]</scope>
    <source>
        <strain>MAFF 311018</strain>
    </source>
</reference>
<feature type="chain" id="PRO_0000229891" description="23S rRNA (uracil(1939)-C(5))-methyltransferase RlmD">
    <location>
        <begin position="1"/>
        <end position="444"/>
    </location>
</feature>
<feature type="domain" description="TRAM" evidence="1">
    <location>
        <begin position="5"/>
        <end position="67"/>
    </location>
</feature>
<feature type="active site" description="Nucleophile" evidence="1">
    <location>
        <position position="400"/>
    </location>
</feature>
<feature type="binding site" evidence="1">
    <location>
        <position position="80"/>
    </location>
    <ligand>
        <name>[4Fe-4S] cluster</name>
        <dbReference type="ChEBI" id="CHEBI:49883"/>
    </ligand>
</feature>
<feature type="binding site" evidence="1">
    <location>
        <position position="86"/>
    </location>
    <ligand>
        <name>[4Fe-4S] cluster</name>
        <dbReference type="ChEBI" id="CHEBI:49883"/>
    </ligand>
</feature>
<feature type="binding site" evidence="1">
    <location>
        <position position="89"/>
    </location>
    <ligand>
        <name>[4Fe-4S] cluster</name>
        <dbReference type="ChEBI" id="CHEBI:49883"/>
    </ligand>
</feature>
<feature type="binding site" evidence="1">
    <location>
        <position position="168"/>
    </location>
    <ligand>
        <name>[4Fe-4S] cluster</name>
        <dbReference type="ChEBI" id="CHEBI:49883"/>
    </ligand>
</feature>
<feature type="binding site" evidence="1">
    <location>
        <position position="276"/>
    </location>
    <ligand>
        <name>S-adenosyl-L-methionine</name>
        <dbReference type="ChEBI" id="CHEBI:59789"/>
    </ligand>
</feature>
<feature type="binding site" evidence="1">
    <location>
        <position position="305"/>
    </location>
    <ligand>
        <name>S-adenosyl-L-methionine</name>
        <dbReference type="ChEBI" id="CHEBI:59789"/>
    </ligand>
</feature>
<feature type="binding site" evidence="1">
    <location>
        <position position="310"/>
    </location>
    <ligand>
        <name>S-adenosyl-L-methionine</name>
        <dbReference type="ChEBI" id="CHEBI:59789"/>
    </ligand>
</feature>
<feature type="binding site" evidence="1">
    <location>
        <position position="326"/>
    </location>
    <ligand>
        <name>S-adenosyl-L-methionine</name>
        <dbReference type="ChEBI" id="CHEBI:59789"/>
    </ligand>
</feature>
<feature type="binding site" evidence="1">
    <location>
        <position position="353"/>
    </location>
    <ligand>
        <name>S-adenosyl-L-methionine</name>
        <dbReference type="ChEBI" id="CHEBI:59789"/>
    </ligand>
</feature>
<feature type="binding site" evidence="1">
    <location>
        <position position="374"/>
    </location>
    <ligand>
        <name>S-adenosyl-L-methionine</name>
        <dbReference type="ChEBI" id="CHEBI:59789"/>
    </ligand>
</feature>
<protein>
    <recommendedName>
        <fullName evidence="1">23S rRNA (uracil(1939)-C(5))-methyltransferase RlmD</fullName>
        <ecNumber evidence="1">2.1.1.190</ecNumber>
    </recommendedName>
    <alternativeName>
        <fullName evidence="1">23S rRNA(m5U1939)-methyltransferase</fullName>
    </alternativeName>
</protein>
<evidence type="ECO:0000255" key="1">
    <source>
        <dbReference type="HAMAP-Rule" id="MF_01010"/>
    </source>
</evidence>
<evidence type="ECO:0000305" key="2"/>